<sequence>MHKEQLMKLHQFFVYVVKEIMDDNLENTDNECKKLFKIYEMLDIRPHHIHRLKSEQKAAILLLSACVASYLANNMDNVPKNLAKKLEENAFKHLNSCKKNIIILEENENNGESAEKEE</sequence>
<protein>
    <recommendedName>
        <fullName>UPF0058 protein MJ1132</fullName>
    </recommendedName>
</protein>
<evidence type="ECO:0000305" key="1"/>
<name>Y1132_METJA</name>
<gene>
    <name type="ordered locus">MJ1132</name>
</gene>
<accession>Q58532</accession>
<comment type="similarity">
    <text evidence="1">Belongs to the UPF0058 family.</text>
</comment>
<reference key="1">
    <citation type="journal article" date="1996" name="Science">
        <title>Complete genome sequence of the methanogenic archaeon, Methanococcus jannaschii.</title>
        <authorList>
            <person name="Bult C.J."/>
            <person name="White O."/>
            <person name="Olsen G.J."/>
            <person name="Zhou L."/>
            <person name="Fleischmann R.D."/>
            <person name="Sutton G.G."/>
            <person name="Blake J.A."/>
            <person name="FitzGerald L.M."/>
            <person name="Clayton R.A."/>
            <person name="Gocayne J.D."/>
            <person name="Kerlavage A.R."/>
            <person name="Dougherty B.A."/>
            <person name="Tomb J.-F."/>
            <person name="Adams M.D."/>
            <person name="Reich C.I."/>
            <person name="Overbeek R."/>
            <person name="Kirkness E.F."/>
            <person name="Weinstock K.G."/>
            <person name="Merrick J.M."/>
            <person name="Glodek A."/>
            <person name="Scott J.L."/>
            <person name="Geoghagen N.S.M."/>
            <person name="Weidman J.F."/>
            <person name="Fuhrmann J.L."/>
            <person name="Nguyen D."/>
            <person name="Utterback T.R."/>
            <person name="Kelley J.M."/>
            <person name="Peterson J.D."/>
            <person name="Sadow P.W."/>
            <person name="Hanna M.C."/>
            <person name="Cotton M.D."/>
            <person name="Roberts K.M."/>
            <person name="Hurst M.A."/>
            <person name="Kaine B.P."/>
            <person name="Borodovsky M."/>
            <person name="Klenk H.-P."/>
            <person name="Fraser C.M."/>
            <person name="Smith H.O."/>
            <person name="Woese C.R."/>
            <person name="Venter J.C."/>
        </authorList>
    </citation>
    <scope>NUCLEOTIDE SEQUENCE [LARGE SCALE GENOMIC DNA]</scope>
    <source>
        <strain>ATCC 43067 / DSM 2661 / JAL-1 / JCM 10045 / NBRC 100440</strain>
    </source>
</reference>
<feature type="chain" id="PRO_0000135709" description="UPF0058 protein MJ1132">
    <location>
        <begin position="1"/>
        <end position="118"/>
    </location>
</feature>
<organism>
    <name type="scientific">Methanocaldococcus jannaschii (strain ATCC 43067 / DSM 2661 / JAL-1 / JCM 10045 / NBRC 100440)</name>
    <name type="common">Methanococcus jannaschii</name>
    <dbReference type="NCBI Taxonomy" id="243232"/>
    <lineage>
        <taxon>Archaea</taxon>
        <taxon>Methanobacteriati</taxon>
        <taxon>Methanobacteriota</taxon>
        <taxon>Methanomada group</taxon>
        <taxon>Methanococci</taxon>
        <taxon>Methanococcales</taxon>
        <taxon>Methanocaldococcaceae</taxon>
        <taxon>Methanocaldococcus</taxon>
    </lineage>
</organism>
<keyword id="KW-1185">Reference proteome</keyword>
<dbReference type="EMBL" id="L77117">
    <property type="protein sequence ID" value="AAB99134.1"/>
    <property type="molecule type" value="Genomic_DNA"/>
</dbReference>
<dbReference type="PIR" id="C64441">
    <property type="entry name" value="C64441"/>
</dbReference>
<dbReference type="RefSeq" id="WP_010870643.1">
    <property type="nucleotide sequence ID" value="NC_000909.1"/>
</dbReference>
<dbReference type="SMR" id="Q58532"/>
<dbReference type="FunCoup" id="Q58532">
    <property type="interactions" value="1"/>
</dbReference>
<dbReference type="STRING" id="243232.MJ_1132"/>
<dbReference type="PaxDb" id="243232-MJ_1132"/>
<dbReference type="EnsemblBacteria" id="AAB99134">
    <property type="protein sequence ID" value="AAB99134"/>
    <property type="gene ID" value="MJ_1132"/>
</dbReference>
<dbReference type="GeneID" id="1452028"/>
<dbReference type="KEGG" id="mja:MJ_1132"/>
<dbReference type="eggNOG" id="arCOG02254">
    <property type="taxonomic scope" value="Archaea"/>
</dbReference>
<dbReference type="HOGENOM" id="CLU_167318_0_0_2"/>
<dbReference type="InParanoid" id="Q58532"/>
<dbReference type="OrthoDB" id="177623at2157"/>
<dbReference type="PhylomeDB" id="Q58532"/>
<dbReference type="Proteomes" id="UP000000805">
    <property type="component" value="Chromosome"/>
</dbReference>
<dbReference type="Gene3D" id="1.20.1270.110">
    <property type="entry name" value="Uncharacterised protein family UPF0058"/>
    <property type="match status" value="1"/>
</dbReference>
<dbReference type="InterPro" id="IPR002753">
    <property type="entry name" value="UPF0058"/>
</dbReference>
<dbReference type="InterPro" id="IPR036519">
    <property type="entry name" value="UPF0058_sf"/>
</dbReference>
<dbReference type="PANTHER" id="PTHR42203">
    <property type="entry name" value="UPF0058 PROTEIN MJ1205"/>
    <property type="match status" value="1"/>
</dbReference>
<dbReference type="PANTHER" id="PTHR42203:SF2">
    <property type="entry name" value="UPF0058 PROTEIN MJ1205"/>
    <property type="match status" value="1"/>
</dbReference>
<dbReference type="Pfam" id="PF01893">
    <property type="entry name" value="UPF0058"/>
    <property type="match status" value="1"/>
</dbReference>
<dbReference type="SUPFAM" id="SSF140371">
    <property type="entry name" value="Vng1086c-like"/>
    <property type="match status" value="1"/>
</dbReference>
<proteinExistence type="inferred from homology"/>